<organism>
    <name type="scientific">Escherichia coli O7:K1 (strain IAI39 / ExPEC)</name>
    <dbReference type="NCBI Taxonomy" id="585057"/>
    <lineage>
        <taxon>Bacteria</taxon>
        <taxon>Pseudomonadati</taxon>
        <taxon>Pseudomonadota</taxon>
        <taxon>Gammaproteobacteria</taxon>
        <taxon>Enterobacterales</taxon>
        <taxon>Enterobacteriaceae</taxon>
        <taxon>Escherichia</taxon>
    </lineage>
</organism>
<gene>
    <name evidence="1" type="primary">glpG</name>
    <name type="ordered locus">ECIAI39_3904</name>
</gene>
<feature type="chain" id="PRO_1000147854" description="Rhomboid protease GlpG">
    <location>
        <begin position="1"/>
        <end position="276"/>
    </location>
</feature>
<feature type="transmembrane region" description="Helical" evidence="1">
    <location>
        <begin position="94"/>
        <end position="114"/>
    </location>
</feature>
<feature type="transmembrane region" description="Helical" evidence="1">
    <location>
        <begin position="142"/>
        <end position="162"/>
    </location>
</feature>
<feature type="transmembrane region" description="Helical" evidence="1">
    <location>
        <begin position="169"/>
        <end position="189"/>
    </location>
</feature>
<feature type="transmembrane region" description="Helical" evidence="1">
    <location>
        <begin position="192"/>
        <end position="212"/>
    </location>
</feature>
<feature type="transmembrane region" description="Helical" evidence="1">
    <location>
        <begin position="229"/>
        <end position="249"/>
    </location>
</feature>
<feature type="transmembrane region" description="Helical" evidence="1">
    <location>
        <begin position="250"/>
        <end position="270"/>
    </location>
</feature>
<feature type="active site" description="Nucleophile" evidence="1">
    <location>
        <position position="201"/>
    </location>
</feature>
<feature type="active site" evidence="1">
    <location>
        <position position="254"/>
    </location>
</feature>
<proteinExistence type="inferred from homology"/>
<accession>B7NMI8</accession>
<keyword id="KW-0997">Cell inner membrane</keyword>
<keyword id="KW-1003">Cell membrane</keyword>
<keyword id="KW-0378">Hydrolase</keyword>
<keyword id="KW-0472">Membrane</keyword>
<keyword id="KW-0645">Protease</keyword>
<keyword id="KW-0720">Serine protease</keyword>
<keyword id="KW-0812">Transmembrane</keyword>
<keyword id="KW-1133">Transmembrane helix</keyword>
<name>GLPG_ECO7I</name>
<sequence>MLMITSFANPRVAQAFVDYMATQGVILTIQQHNQSDVWLADESQAERVRAELARFLENPADPRYLAASWQSGHTDSGLHYRRYPFFAALRERAGPVTWVMMIACVVVFIAMQILGDQEVMLWLAWPFDPTLKFEFWRYFTHALMHFSLMHILFNLLWWWYLGGAVEKRLGSGKLIVITLISALLSGYVQQKFSGPWFGGLSGVVYALMGYVWLRGERDPQSGIYLQRGLIIFALIWIVAGWFDLFGMSMANGAHIAGLAVGLAMAFVDSLNARKRK</sequence>
<reference key="1">
    <citation type="journal article" date="2009" name="PLoS Genet.">
        <title>Organised genome dynamics in the Escherichia coli species results in highly diverse adaptive paths.</title>
        <authorList>
            <person name="Touchon M."/>
            <person name="Hoede C."/>
            <person name="Tenaillon O."/>
            <person name="Barbe V."/>
            <person name="Baeriswyl S."/>
            <person name="Bidet P."/>
            <person name="Bingen E."/>
            <person name="Bonacorsi S."/>
            <person name="Bouchier C."/>
            <person name="Bouvet O."/>
            <person name="Calteau A."/>
            <person name="Chiapello H."/>
            <person name="Clermont O."/>
            <person name="Cruveiller S."/>
            <person name="Danchin A."/>
            <person name="Diard M."/>
            <person name="Dossat C."/>
            <person name="Karoui M.E."/>
            <person name="Frapy E."/>
            <person name="Garry L."/>
            <person name="Ghigo J.M."/>
            <person name="Gilles A.M."/>
            <person name="Johnson J."/>
            <person name="Le Bouguenec C."/>
            <person name="Lescat M."/>
            <person name="Mangenot S."/>
            <person name="Martinez-Jehanne V."/>
            <person name="Matic I."/>
            <person name="Nassif X."/>
            <person name="Oztas S."/>
            <person name="Petit M.A."/>
            <person name="Pichon C."/>
            <person name="Rouy Z."/>
            <person name="Ruf C.S."/>
            <person name="Schneider D."/>
            <person name="Tourret J."/>
            <person name="Vacherie B."/>
            <person name="Vallenet D."/>
            <person name="Medigue C."/>
            <person name="Rocha E.P.C."/>
            <person name="Denamur E."/>
        </authorList>
    </citation>
    <scope>NUCLEOTIDE SEQUENCE [LARGE SCALE GENOMIC DNA]</scope>
    <source>
        <strain>IAI39 / ExPEC</strain>
    </source>
</reference>
<comment type="function">
    <text evidence="1">Rhomboid-type serine protease that catalyzes intramembrane proteolysis.</text>
</comment>
<comment type="catalytic activity">
    <reaction evidence="1">
        <text>Cleaves type-1 transmembrane domains using a catalytic dyad composed of serine and histidine that are contributed by different transmembrane domains.</text>
        <dbReference type="EC" id="3.4.21.105"/>
    </reaction>
</comment>
<comment type="subcellular location">
    <subcellularLocation>
        <location evidence="1">Cell inner membrane</location>
        <topology evidence="1">Multi-pass membrane protein</topology>
    </subcellularLocation>
</comment>
<comment type="similarity">
    <text evidence="1">Belongs to the peptidase S54 family.</text>
</comment>
<evidence type="ECO:0000255" key="1">
    <source>
        <dbReference type="HAMAP-Rule" id="MF_01594"/>
    </source>
</evidence>
<dbReference type="EC" id="3.4.21.105" evidence="1"/>
<dbReference type="EMBL" id="CU928164">
    <property type="protein sequence ID" value="CAR20016.1"/>
    <property type="molecule type" value="Genomic_DNA"/>
</dbReference>
<dbReference type="RefSeq" id="WP_000928734.1">
    <property type="nucleotide sequence ID" value="NC_011750.1"/>
</dbReference>
<dbReference type="RefSeq" id="YP_002409797.1">
    <property type="nucleotide sequence ID" value="NC_011750.1"/>
</dbReference>
<dbReference type="SMR" id="B7NMI8"/>
<dbReference type="STRING" id="585057.ECIAI39_3904"/>
<dbReference type="MEROPS" id="S54.016"/>
<dbReference type="KEGG" id="ect:ECIAI39_3904"/>
<dbReference type="PATRIC" id="fig|585057.6.peg.4042"/>
<dbReference type="HOGENOM" id="CLU_058989_0_0_6"/>
<dbReference type="Proteomes" id="UP000000749">
    <property type="component" value="Chromosome"/>
</dbReference>
<dbReference type="GO" id="GO:0005886">
    <property type="term" value="C:plasma membrane"/>
    <property type="evidence" value="ECO:0007669"/>
    <property type="project" value="UniProtKB-SubCell"/>
</dbReference>
<dbReference type="GO" id="GO:0004252">
    <property type="term" value="F:serine-type endopeptidase activity"/>
    <property type="evidence" value="ECO:0007669"/>
    <property type="project" value="UniProtKB-UniRule"/>
</dbReference>
<dbReference type="GO" id="GO:0006508">
    <property type="term" value="P:proteolysis"/>
    <property type="evidence" value="ECO:0007669"/>
    <property type="project" value="UniProtKB-UniRule"/>
</dbReference>
<dbReference type="FunFam" id="1.20.1540.10:FF:000003">
    <property type="entry name" value="Rhomboid protease GlpG"/>
    <property type="match status" value="1"/>
</dbReference>
<dbReference type="FunFam" id="3.30.70.2350:FF:000001">
    <property type="entry name" value="Rhomboid protease GlpG"/>
    <property type="match status" value="1"/>
</dbReference>
<dbReference type="Gene3D" id="3.30.70.2350">
    <property type="match status" value="1"/>
</dbReference>
<dbReference type="Gene3D" id="1.20.1540.10">
    <property type="entry name" value="Rhomboid-like"/>
    <property type="match status" value="1"/>
</dbReference>
<dbReference type="HAMAP" id="MF_01594">
    <property type="entry name" value="Rhomboid_GlpG"/>
    <property type="match status" value="1"/>
</dbReference>
<dbReference type="InterPro" id="IPR038236">
    <property type="entry name" value="GlpG_N_sf"/>
</dbReference>
<dbReference type="InterPro" id="IPR022732">
    <property type="entry name" value="Peptidase_S54_GlpG_N"/>
</dbReference>
<dbReference type="InterPro" id="IPR022764">
    <property type="entry name" value="Peptidase_S54_rhomboid_dom"/>
</dbReference>
<dbReference type="InterPro" id="IPR035952">
    <property type="entry name" value="Rhomboid-like_sf"/>
</dbReference>
<dbReference type="InterPro" id="IPR023662">
    <property type="entry name" value="Rhomboid_protease_GlpG"/>
</dbReference>
<dbReference type="NCBIfam" id="NF008155">
    <property type="entry name" value="PRK10907.1"/>
    <property type="match status" value="1"/>
</dbReference>
<dbReference type="NCBIfam" id="TIGR04239">
    <property type="entry name" value="rhombo_GlpG"/>
    <property type="match status" value="1"/>
</dbReference>
<dbReference type="PANTHER" id="PTHR43066:SF26">
    <property type="entry name" value="RHOMBOID PROTEASE GLPG"/>
    <property type="match status" value="1"/>
</dbReference>
<dbReference type="PANTHER" id="PTHR43066">
    <property type="entry name" value="RHOMBOID-RELATED PROTEIN"/>
    <property type="match status" value="1"/>
</dbReference>
<dbReference type="Pfam" id="PF01694">
    <property type="entry name" value="Rhomboid"/>
    <property type="match status" value="1"/>
</dbReference>
<dbReference type="Pfam" id="PF12122">
    <property type="entry name" value="Rhomboid_N"/>
    <property type="match status" value="1"/>
</dbReference>
<dbReference type="SUPFAM" id="SSF144091">
    <property type="entry name" value="Rhomboid-like"/>
    <property type="match status" value="1"/>
</dbReference>
<protein>
    <recommendedName>
        <fullName evidence="1">Rhomboid protease GlpG</fullName>
        <ecNumber evidence="1">3.4.21.105</ecNumber>
    </recommendedName>
    <alternativeName>
        <fullName evidence="1">Intramembrane serine protease</fullName>
    </alternativeName>
</protein>